<keyword id="KW-0479">Metal-binding</keyword>
<keyword id="KW-0539">Nucleus</keyword>
<keyword id="KW-0832">Ubl conjugation</keyword>
<keyword id="KW-0833">Ubl conjugation pathway</keyword>
<keyword id="KW-0862">Zinc</keyword>
<comment type="function">
    <text evidence="2">Substrate recognition component of a DCX (DDB1-CUL4-X-box) E3 protein ligase complex that mediates the ubiquitination and subsequent proteasomal degradation of target proteins. Has an essential role in mediating growth by negatively regulating insulin signaling. It also has a role in maintaining presynaptic function in the neuromuscular junction synapses of third-instar larvae.</text>
</comment>
<comment type="pathway">
    <text evidence="1">Protein modification; protein ubiquitination.</text>
</comment>
<comment type="subunit">
    <text evidence="1 2">Likely a component of a DCX (DDB1-CUL4-X-box) protein ligase complex (By similarity). May interact with pic/DDB1 (By similarity).</text>
</comment>
<comment type="subcellular location">
    <subcellularLocation>
        <location evidence="2">Nucleus</location>
    </subcellularLocation>
</comment>
<comment type="PTM">
    <text evidence="2">Ubiquitinated.</text>
</comment>
<comment type="similarity">
    <text evidence="6">Belongs to the CRBN family.</text>
</comment>
<name>CRBN_DROYA</name>
<reference key="1">
    <citation type="journal article" date="2007" name="Nature">
        <title>Evolution of genes and genomes on the Drosophila phylogeny.</title>
        <authorList>
            <consortium name="Drosophila 12 genomes consortium"/>
        </authorList>
    </citation>
    <scope>NUCLEOTIDE SEQUENCE [LARGE SCALE GENOMIC DNA]</scope>
    <source>
        <strain>Tai18E2 / Tucson 14021-0261.01</strain>
    </source>
</reference>
<evidence type="ECO:0000250" key="1">
    <source>
        <dbReference type="UniProtKB" id="Q96SW2"/>
    </source>
</evidence>
<evidence type="ECO:0000250" key="2">
    <source>
        <dbReference type="UniProtKB" id="Q9VH36"/>
    </source>
</evidence>
<evidence type="ECO:0000255" key="3">
    <source>
        <dbReference type="PROSITE-ProRule" id="PRU01123"/>
    </source>
</evidence>
<evidence type="ECO:0000255" key="4">
    <source>
        <dbReference type="PROSITE-ProRule" id="PRU01124"/>
    </source>
</evidence>
<evidence type="ECO:0000256" key="5">
    <source>
        <dbReference type="SAM" id="MobiDB-lite"/>
    </source>
</evidence>
<evidence type="ECO:0000305" key="6"/>
<feature type="chain" id="PRO_0000393889" description="Protein cereblon">
    <location>
        <begin position="1"/>
        <end position="588"/>
    </location>
</feature>
<feature type="domain" description="Lon N-terminal" evidence="3">
    <location>
        <begin position="228"/>
        <end position="454"/>
    </location>
</feature>
<feature type="domain" description="CULT" evidence="4">
    <location>
        <begin position="453"/>
        <end position="562"/>
    </location>
</feature>
<feature type="region of interest" description="Disordered" evidence="5">
    <location>
        <begin position="1"/>
        <end position="107"/>
    </location>
</feature>
<feature type="region of interest" description="Disordered" evidence="5">
    <location>
        <begin position="159"/>
        <end position="197"/>
    </location>
</feature>
<feature type="compositionally biased region" description="Polar residues" evidence="5">
    <location>
        <begin position="41"/>
        <end position="50"/>
    </location>
</feature>
<feature type="compositionally biased region" description="Acidic residues" evidence="5">
    <location>
        <begin position="75"/>
        <end position="85"/>
    </location>
</feature>
<feature type="compositionally biased region" description="Polar residues" evidence="5">
    <location>
        <begin position="86"/>
        <end position="96"/>
    </location>
</feature>
<feature type="compositionally biased region" description="Basic and acidic residues" evidence="5">
    <location>
        <begin position="159"/>
        <end position="168"/>
    </location>
</feature>
<feature type="compositionally biased region" description="Pro residues" evidence="5">
    <location>
        <begin position="181"/>
        <end position="192"/>
    </location>
</feature>
<feature type="binding site" evidence="4">
    <location>
        <position position="458"/>
    </location>
    <ligand>
        <name>Zn(2+)</name>
        <dbReference type="ChEBI" id="CHEBI:29105"/>
    </ligand>
</feature>
<feature type="binding site" evidence="4">
    <location>
        <position position="461"/>
    </location>
    <ligand>
        <name>Zn(2+)</name>
        <dbReference type="ChEBI" id="CHEBI:29105"/>
    </ligand>
</feature>
<feature type="binding site" evidence="4">
    <location>
        <position position="527"/>
    </location>
    <ligand>
        <name>Zn(2+)</name>
        <dbReference type="ChEBI" id="CHEBI:29105"/>
    </ligand>
</feature>
<feature type="binding site" evidence="4">
    <location>
        <position position="530"/>
    </location>
    <ligand>
        <name>Zn(2+)</name>
        <dbReference type="ChEBI" id="CHEBI:29105"/>
    </ligand>
</feature>
<accession>B4PVI7</accession>
<sequence length="588" mass="66707">MDDEETSEINSVQGQDEDVQLEVQPQAQGPQDRQVDAIEQAWNNATQDEQSPPAEEAFQDPLAIDGEGGNAPEAMVEDVLQDDTASEGSHPSSDMSLETPGSEDDSDLELLPRWMIPQNRLRSAVDMMVSQARNRDGGIAALLNRDNFLQRVRSIVFSQERRRSRTSEETSQEAADAEQPNDPPPQQPPRPPIDIGFDTNLPAEHSYFGNHLSRVPGVDYLEVGSVHHMLIFLHQHILFPGEVLPFMIDGRMFDEDMPGLDGLIFGVGFPLMQPPEDNPLKLYGVTCQIYERGESGRGLVFYKSRALQRIVINCEDIQGSPQYIARNPTSKCFSKVKILPEYFLPEPLQSVEMGSMARFRDIPSMRDKYRRFQLSTTTWPSDACQEYSFASIVERARQRLESQKIDTMPKCPIQLSFWLVRNLHLTEKMMRLTFLTDSVNTRLQLIKSTFKDESLFFCRYCNSSLAHCADLFAMSKHGVQTQYCNPDGYIHETNTVYRVMSHAIGYSGEPSTKFSWFPGYQWHIILCKFCAQHVGWEFKAVQPNLTPRVFFGLAGSSVRIGKASENTPFNGSTYVVRNMLRLISNEME</sequence>
<proteinExistence type="inferred from homology"/>
<gene>
    <name evidence="2" type="primary">ohgt</name>
    <name evidence="2" type="synonym">crbn</name>
    <name type="ORF">GE26004</name>
</gene>
<organism>
    <name type="scientific">Drosophila yakuba</name>
    <name type="common">Fruit fly</name>
    <dbReference type="NCBI Taxonomy" id="7245"/>
    <lineage>
        <taxon>Eukaryota</taxon>
        <taxon>Metazoa</taxon>
        <taxon>Ecdysozoa</taxon>
        <taxon>Arthropoda</taxon>
        <taxon>Hexapoda</taxon>
        <taxon>Insecta</taxon>
        <taxon>Pterygota</taxon>
        <taxon>Neoptera</taxon>
        <taxon>Endopterygota</taxon>
        <taxon>Diptera</taxon>
        <taxon>Brachycera</taxon>
        <taxon>Muscomorpha</taxon>
        <taxon>Ephydroidea</taxon>
        <taxon>Drosophilidae</taxon>
        <taxon>Drosophila</taxon>
        <taxon>Sophophora</taxon>
    </lineage>
</organism>
<protein>
    <recommendedName>
        <fullName evidence="2">Protein cereblon</fullName>
    </recommendedName>
    <alternativeName>
        <fullName evidence="2">Protein ohgata</fullName>
    </alternativeName>
</protein>
<dbReference type="EMBL" id="CM000160">
    <property type="protein sequence ID" value="EDW96760.1"/>
    <property type="molecule type" value="Genomic_DNA"/>
</dbReference>
<dbReference type="SMR" id="B4PVI7"/>
<dbReference type="EnsemblMetazoa" id="FBtr0272522">
    <property type="protein sequence ID" value="FBpp0271014"/>
    <property type="gene ID" value="FBgn0243047"/>
</dbReference>
<dbReference type="EnsemblMetazoa" id="XM_002097012.3">
    <property type="protein sequence ID" value="XP_002097048.1"/>
    <property type="gene ID" value="LOC6536467"/>
</dbReference>
<dbReference type="GeneID" id="6536467"/>
<dbReference type="KEGG" id="dya:Dyak_GE26004"/>
<dbReference type="CTD" id="41230"/>
<dbReference type="eggNOG" id="KOG1400">
    <property type="taxonomic scope" value="Eukaryota"/>
</dbReference>
<dbReference type="HOGENOM" id="CLU_028769_0_0_1"/>
<dbReference type="OMA" id="SPQYIAR"/>
<dbReference type="OrthoDB" id="267517at2759"/>
<dbReference type="PhylomeDB" id="B4PVI7"/>
<dbReference type="UniPathway" id="UPA00143"/>
<dbReference type="Proteomes" id="UP000002282">
    <property type="component" value="Chromosome 3R"/>
</dbReference>
<dbReference type="GO" id="GO:0005634">
    <property type="term" value="C:nucleus"/>
    <property type="evidence" value="ECO:0007669"/>
    <property type="project" value="UniProtKB-SubCell"/>
</dbReference>
<dbReference type="GO" id="GO:0046872">
    <property type="term" value="F:metal ion binding"/>
    <property type="evidence" value="ECO:0007669"/>
    <property type="project" value="UniProtKB-KW"/>
</dbReference>
<dbReference type="GO" id="GO:1900075">
    <property type="term" value="P:positive regulation of neuromuscular synaptic transmission"/>
    <property type="evidence" value="ECO:0007669"/>
    <property type="project" value="EnsemblMetazoa"/>
</dbReference>
<dbReference type="GO" id="GO:0030177">
    <property type="term" value="P:positive regulation of Wnt signaling pathway"/>
    <property type="evidence" value="ECO:0007669"/>
    <property type="project" value="EnsemblMetazoa"/>
</dbReference>
<dbReference type="GO" id="GO:0016567">
    <property type="term" value="P:protein ubiquitination"/>
    <property type="evidence" value="ECO:0007669"/>
    <property type="project" value="UniProtKB-UniPathway"/>
</dbReference>
<dbReference type="CDD" id="cd15777">
    <property type="entry name" value="CRBN_C_like"/>
    <property type="match status" value="1"/>
</dbReference>
<dbReference type="FunFam" id="2.170.150.20:FF:000005">
    <property type="entry name" value="Blast:Protein cereblon homolog"/>
    <property type="match status" value="1"/>
</dbReference>
<dbReference type="Gene3D" id="1.20.58.1480">
    <property type="match status" value="1"/>
</dbReference>
<dbReference type="Gene3D" id="2.170.150.20">
    <property type="entry name" value="Peptide methionine sulfoxide reductase"/>
    <property type="match status" value="1"/>
</dbReference>
<dbReference type="InterPro" id="IPR034750">
    <property type="entry name" value="CULT"/>
</dbReference>
<dbReference type="InterPro" id="IPR003111">
    <property type="entry name" value="Lon_prtase_N"/>
</dbReference>
<dbReference type="InterPro" id="IPR004910">
    <property type="entry name" value="Yippee/Mis18/Cereblon"/>
</dbReference>
<dbReference type="Pfam" id="PF03226">
    <property type="entry name" value="Yippee-Mis18"/>
    <property type="match status" value="1"/>
</dbReference>
<dbReference type="PROSITE" id="PS51788">
    <property type="entry name" value="CULT"/>
    <property type="match status" value="1"/>
</dbReference>
<dbReference type="PROSITE" id="PS51787">
    <property type="entry name" value="LON_N"/>
    <property type="match status" value="1"/>
</dbReference>